<evidence type="ECO:0000255" key="1">
    <source>
        <dbReference type="HAMAP-Rule" id="MF_01519"/>
    </source>
</evidence>
<name>YAEH_ECO7I</name>
<organism>
    <name type="scientific">Escherichia coli O7:K1 (strain IAI39 / ExPEC)</name>
    <dbReference type="NCBI Taxonomy" id="585057"/>
    <lineage>
        <taxon>Bacteria</taxon>
        <taxon>Pseudomonadati</taxon>
        <taxon>Pseudomonadota</taxon>
        <taxon>Gammaproteobacteria</taxon>
        <taxon>Enterobacterales</taxon>
        <taxon>Enterobacteriaceae</taxon>
        <taxon>Escherichia</taxon>
    </lineage>
</organism>
<comment type="similarity">
    <text evidence="1">Belongs to the UPF0325 family.</text>
</comment>
<reference key="1">
    <citation type="journal article" date="2009" name="PLoS Genet.">
        <title>Organised genome dynamics in the Escherichia coli species results in highly diverse adaptive paths.</title>
        <authorList>
            <person name="Touchon M."/>
            <person name="Hoede C."/>
            <person name="Tenaillon O."/>
            <person name="Barbe V."/>
            <person name="Baeriswyl S."/>
            <person name="Bidet P."/>
            <person name="Bingen E."/>
            <person name="Bonacorsi S."/>
            <person name="Bouchier C."/>
            <person name="Bouvet O."/>
            <person name="Calteau A."/>
            <person name="Chiapello H."/>
            <person name="Clermont O."/>
            <person name="Cruveiller S."/>
            <person name="Danchin A."/>
            <person name="Diard M."/>
            <person name="Dossat C."/>
            <person name="Karoui M.E."/>
            <person name="Frapy E."/>
            <person name="Garry L."/>
            <person name="Ghigo J.M."/>
            <person name="Gilles A.M."/>
            <person name="Johnson J."/>
            <person name="Le Bouguenec C."/>
            <person name="Lescat M."/>
            <person name="Mangenot S."/>
            <person name="Martinez-Jehanne V."/>
            <person name="Matic I."/>
            <person name="Nassif X."/>
            <person name="Oztas S."/>
            <person name="Petit M.A."/>
            <person name="Pichon C."/>
            <person name="Rouy Z."/>
            <person name="Ruf C.S."/>
            <person name="Schneider D."/>
            <person name="Tourret J."/>
            <person name="Vacherie B."/>
            <person name="Vallenet D."/>
            <person name="Medigue C."/>
            <person name="Rocha E.P.C."/>
            <person name="Denamur E."/>
        </authorList>
    </citation>
    <scope>NUCLEOTIDE SEQUENCE [LARGE SCALE GENOMIC DNA]</scope>
    <source>
        <strain>IAI39 / ExPEC</strain>
    </source>
</reference>
<feature type="chain" id="PRO_1000198430" description="UPF0325 protein YaeH">
    <location>
        <begin position="1"/>
        <end position="128"/>
    </location>
</feature>
<protein>
    <recommendedName>
        <fullName evidence="1">UPF0325 protein YaeH</fullName>
    </recommendedName>
</protein>
<accession>B7NIC6</accession>
<dbReference type="EMBL" id="CU928164">
    <property type="protein sequence ID" value="CAR16307.1"/>
    <property type="molecule type" value="Genomic_DNA"/>
</dbReference>
<dbReference type="RefSeq" id="WP_000272188.1">
    <property type="nucleotide sequence ID" value="NC_011750.1"/>
</dbReference>
<dbReference type="RefSeq" id="YP_002406213.1">
    <property type="nucleotide sequence ID" value="NC_011750.1"/>
</dbReference>
<dbReference type="SMR" id="B7NIC6"/>
<dbReference type="STRING" id="585057.ECIAI39_0167"/>
<dbReference type="KEGG" id="ect:ECIAI39_0167"/>
<dbReference type="PATRIC" id="fig|585057.6.peg.180"/>
<dbReference type="HOGENOM" id="CLU_136774_0_0_6"/>
<dbReference type="Proteomes" id="UP000000749">
    <property type="component" value="Chromosome"/>
</dbReference>
<dbReference type="HAMAP" id="MF_01519">
    <property type="entry name" value="UPF0325"/>
    <property type="match status" value="1"/>
</dbReference>
<dbReference type="InterPro" id="IPR020911">
    <property type="entry name" value="UPF0325"/>
</dbReference>
<dbReference type="NCBIfam" id="NF010213">
    <property type="entry name" value="PRK13677.1"/>
    <property type="match status" value="1"/>
</dbReference>
<dbReference type="Pfam" id="PF11944">
    <property type="entry name" value="DUF3461"/>
    <property type="match status" value="1"/>
</dbReference>
<proteinExistence type="inferred from homology"/>
<gene>
    <name evidence="1" type="primary">yaeH</name>
    <name type="ordered locus">ECIAI39_0167</name>
</gene>
<sequence length="128" mass="15096">MYDNLKSLGITNPEEIDRYSLRQEANNDILKIYFQKDKGEFFAKSVKFKYPRQRKTVVADGVGQGYKEVQEISPNLRYIIDELDQICQRDRSEVDLKRKILDDLRHLESVVTNKISEIEADLEKLTRK</sequence>